<accession>Q4ZRC2</accession>
<name>IOLG_PSEU2</name>
<proteinExistence type="inferred from homology"/>
<gene>
    <name evidence="1" type="primary">iolG</name>
    <name type="ordered locus">Psyr_3268</name>
</gene>
<comment type="function">
    <text evidence="1">Involved in the oxidation of myo-inositol (MI) to 2-keto-myo-inositol (2KMI or 2-inosose).</text>
</comment>
<comment type="catalytic activity">
    <reaction evidence="1">
        <text>myo-inositol + NAD(+) = scyllo-inosose + NADH + H(+)</text>
        <dbReference type="Rhea" id="RHEA:16949"/>
        <dbReference type="ChEBI" id="CHEBI:15378"/>
        <dbReference type="ChEBI" id="CHEBI:17268"/>
        <dbReference type="ChEBI" id="CHEBI:17811"/>
        <dbReference type="ChEBI" id="CHEBI:57540"/>
        <dbReference type="ChEBI" id="CHEBI:57945"/>
        <dbReference type="EC" id="1.1.1.18"/>
    </reaction>
</comment>
<comment type="subunit">
    <text evidence="1">Homotetramer.</text>
</comment>
<comment type="similarity">
    <text evidence="1">Belongs to the Gfo/Idh/MocA family.</text>
</comment>
<keyword id="KW-0520">NAD</keyword>
<keyword id="KW-0560">Oxidoreductase</keyword>
<dbReference type="EC" id="1.1.1.18" evidence="1"/>
<dbReference type="EMBL" id="CP000075">
    <property type="protein sequence ID" value="AAY38300.1"/>
    <property type="molecule type" value="Genomic_DNA"/>
</dbReference>
<dbReference type="RefSeq" id="WP_011268319.1">
    <property type="nucleotide sequence ID" value="NC_007005.1"/>
</dbReference>
<dbReference type="RefSeq" id="YP_236338.1">
    <property type="nucleotide sequence ID" value="NC_007005.1"/>
</dbReference>
<dbReference type="SMR" id="Q4ZRC2"/>
<dbReference type="STRING" id="205918.Psyr_3268"/>
<dbReference type="KEGG" id="psb:Psyr_3268"/>
<dbReference type="PATRIC" id="fig|205918.7.peg.3342"/>
<dbReference type="eggNOG" id="COG0673">
    <property type="taxonomic scope" value="Bacteria"/>
</dbReference>
<dbReference type="HOGENOM" id="CLU_023194_0_1_6"/>
<dbReference type="OrthoDB" id="9801953at2"/>
<dbReference type="Proteomes" id="UP000000426">
    <property type="component" value="Chromosome"/>
</dbReference>
<dbReference type="GO" id="GO:0050112">
    <property type="term" value="F:inositol 2-dehydrogenase (NAD+) activity"/>
    <property type="evidence" value="ECO:0007669"/>
    <property type="project" value="UniProtKB-UniRule"/>
</dbReference>
<dbReference type="GO" id="GO:0000166">
    <property type="term" value="F:nucleotide binding"/>
    <property type="evidence" value="ECO:0007669"/>
    <property type="project" value="InterPro"/>
</dbReference>
<dbReference type="GO" id="GO:0019310">
    <property type="term" value="P:inositol catabolic process"/>
    <property type="evidence" value="ECO:0007669"/>
    <property type="project" value="UniProtKB-UniRule"/>
</dbReference>
<dbReference type="Gene3D" id="3.30.360.10">
    <property type="entry name" value="Dihydrodipicolinate Reductase, domain 2"/>
    <property type="match status" value="1"/>
</dbReference>
<dbReference type="Gene3D" id="3.40.50.720">
    <property type="entry name" value="NAD(P)-binding Rossmann-like Domain"/>
    <property type="match status" value="1"/>
</dbReference>
<dbReference type="HAMAP" id="MF_01671">
    <property type="entry name" value="IolG"/>
    <property type="match status" value="1"/>
</dbReference>
<dbReference type="InterPro" id="IPR050424">
    <property type="entry name" value="Gfo-Idh-MocA_inositol_DH"/>
</dbReference>
<dbReference type="InterPro" id="IPR004104">
    <property type="entry name" value="Gfo/Idh/MocA-like_OxRdtase_C"/>
</dbReference>
<dbReference type="InterPro" id="IPR000683">
    <property type="entry name" value="Gfo/Idh/MocA-like_OxRdtase_N"/>
</dbReference>
<dbReference type="InterPro" id="IPR023794">
    <property type="entry name" value="MI/DCI_dehydrogenase"/>
</dbReference>
<dbReference type="InterPro" id="IPR036291">
    <property type="entry name" value="NAD(P)-bd_dom_sf"/>
</dbReference>
<dbReference type="PANTHER" id="PTHR43593">
    <property type="match status" value="1"/>
</dbReference>
<dbReference type="PANTHER" id="PTHR43593:SF1">
    <property type="entry name" value="INOSITOL 2-DEHYDROGENASE"/>
    <property type="match status" value="1"/>
</dbReference>
<dbReference type="Pfam" id="PF01408">
    <property type="entry name" value="GFO_IDH_MocA"/>
    <property type="match status" value="1"/>
</dbReference>
<dbReference type="Pfam" id="PF02894">
    <property type="entry name" value="GFO_IDH_MocA_C"/>
    <property type="match status" value="1"/>
</dbReference>
<dbReference type="SUPFAM" id="SSF55347">
    <property type="entry name" value="Glyceraldehyde-3-phosphate dehydrogenase-like, C-terminal domain"/>
    <property type="match status" value="1"/>
</dbReference>
<dbReference type="SUPFAM" id="SSF51735">
    <property type="entry name" value="NAD(P)-binding Rossmann-fold domains"/>
    <property type="match status" value="1"/>
</dbReference>
<organism>
    <name type="scientific">Pseudomonas syringae pv. syringae (strain B728a)</name>
    <dbReference type="NCBI Taxonomy" id="205918"/>
    <lineage>
        <taxon>Bacteria</taxon>
        <taxon>Pseudomonadati</taxon>
        <taxon>Pseudomonadota</taxon>
        <taxon>Gammaproteobacteria</taxon>
        <taxon>Pseudomonadales</taxon>
        <taxon>Pseudomonadaceae</taxon>
        <taxon>Pseudomonas</taxon>
        <taxon>Pseudomonas syringae</taxon>
    </lineage>
</organism>
<protein>
    <recommendedName>
        <fullName evidence="1">Inositol 2-dehydrogenase</fullName>
        <ecNumber evidence="1">1.1.1.18</ecNumber>
    </recommendedName>
    <alternativeName>
        <fullName evidence="1">Myo-inositol 2-dehydrogenase</fullName>
        <shortName evidence="1">MI 2-dehydrogenase</shortName>
    </alternativeName>
</protein>
<feature type="chain" id="PRO_0000352582" description="Inositol 2-dehydrogenase">
    <location>
        <begin position="1"/>
        <end position="336"/>
    </location>
</feature>
<sequence length="336" mass="36395">MALKLGVIGTGAIGQDHIRRCSKTLVGSQVVAVTDINLEQAAKVVRDLDLGAEVYADGHALIAAPDVEAVLVCSWGPSHEEYVLAAIAAGKPVFCEKPLAVTAEGCRHIVEAEIASGRRLVQVGFMRPYDQGYRALKAAIDSGQIGEPLMLHCAHRNPSVGENYKTDMAITDTLIHELNVLRWLLDDDYVSVQVVFPRKTSKALAHLKDPQIVMLETVKGTRIDVEVFVNCQYGYDIQCEVVGETGIARLPEPSQVQLRSEAKLSNAILMDWKDRFIAAYDVELQDFIDGVKGGTLYGPSAWDGYAAAVAADACVLAQNTGAVVPITLAMRPVFYS</sequence>
<evidence type="ECO:0000255" key="1">
    <source>
        <dbReference type="HAMAP-Rule" id="MF_01671"/>
    </source>
</evidence>
<reference key="1">
    <citation type="journal article" date="2005" name="Proc. Natl. Acad. Sci. U.S.A.">
        <title>Comparison of the complete genome sequences of Pseudomonas syringae pv. syringae B728a and pv. tomato DC3000.</title>
        <authorList>
            <person name="Feil H."/>
            <person name="Feil W.S."/>
            <person name="Chain P."/>
            <person name="Larimer F."/>
            <person name="Dibartolo G."/>
            <person name="Copeland A."/>
            <person name="Lykidis A."/>
            <person name="Trong S."/>
            <person name="Nolan M."/>
            <person name="Goltsman E."/>
            <person name="Thiel J."/>
            <person name="Malfatti S."/>
            <person name="Loper J.E."/>
            <person name="Lapidus A."/>
            <person name="Detter J.C."/>
            <person name="Land M."/>
            <person name="Richardson P.M."/>
            <person name="Kyrpides N.C."/>
            <person name="Ivanova N."/>
            <person name="Lindow S.E."/>
        </authorList>
    </citation>
    <scope>NUCLEOTIDE SEQUENCE [LARGE SCALE GENOMIC DNA]</scope>
    <source>
        <strain>B728a</strain>
    </source>
</reference>